<keyword id="KW-0071">Autoinducer synthesis</keyword>
<keyword id="KW-0408">Iron</keyword>
<keyword id="KW-0456">Lyase</keyword>
<keyword id="KW-0479">Metal-binding</keyword>
<keyword id="KW-0673">Quorum sensing</keyword>
<organism>
    <name type="scientific">Salmonella heidelberg (strain SL476)</name>
    <dbReference type="NCBI Taxonomy" id="454169"/>
    <lineage>
        <taxon>Bacteria</taxon>
        <taxon>Pseudomonadati</taxon>
        <taxon>Pseudomonadota</taxon>
        <taxon>Gammaproteobacteria</taxon>
        <taxon>Enterobacterales</taxon>
        <taxon>Enterobacteriaceae</taxon>
        <taxon>Salmonella</taxon>
    </lineage>
</organism>
<dbReference type="EC" id="4.4.1.21" evidence="1"/>
<dbReference type="EMBL" id="CP001120">
    <property type="protein sequence ID" value="ACF68521.1"/>
    <property type="molecule type" value="Genomic_DNA"/>
</dbReference>
<dbReference type="RefSeq" id="WP_001130194.1">
    <property type="nucleotide sequence ID" value="NC_011083.1"/>
</dbReference>
<dbReference type="SMR" id="B4TF05"/>
<dbReference type="KEGG" id="seh:SeHA_C3001"/>
<dbReference type="HOGENOM" id="CLU_107531_2_0_6"/>
<dbReference type="Proteomes" id="UP000001866">
    <property type="component" value="Chromosome"/>
</dbReference>
<dbReference type="GO" id="GO:0005506">
    <property type="term" value="F:iron ion binding"/>
    <property type="evidence" value="ECO:0007669"/>
    <property type="project" value="InterPro"/>
</dbReference>
<dbReference type="GO" id="GO:0043768">
    <property type="term" value="F:S-ribosylhomocysteine lyase activity"/>
    <property type="evidence" value="ECO:0007669"/>
    <property type="project" value="UniProtKB-UniRule"/>
</dbReference>
<dbReference type="GO" id="GO:0009372">
    <property type="term" value="P:quorum sensing"/>
    <property type="evidence" value="ECO:0007669"/>
    <property type="project" value="UniProtKB-UniRule"/>
</dbReference>
<dbReference type="FunFam" id="3.30.1360.80:FF:000001">
    <property type="entry name" value="S-ribosylhomocysteine lyase"/>
    <property type="match status" value="1"/>
</dbReference>
<dbReference type="Gene3D" id="3.30.1360.80">
    <property type="entry name" value="S-ribosylhomocysteinase (LuxS)"/>
    <property type="match status" value="1"/>
</dbReference>
<dbReference type="HAMAP" id="MF_00091">
    <property type="entry name" value="LuxS"/>
    <property type="match status" value="1"/>
</dbReference>
<dbReference type="InterPro" id="IPR037005">
    <property type="entry name" value="LuxS_sf"/>
</dbReference>
<dbReference type="InterPro" id="IPR011249">
    <property type="entry name" value="Metalloenz_LuxS/M16"/>
</dbReference>
<dbReference type="InterPro" id="IPR003815">
    <property type="entry name" value="S-ribosylhomocysteinase"/>
</dbReference>
<dbReference type="NCBIfam" id="NF002602">
    <property type="entry name" value="PRK02260.1-2"/>
    <property type="match status" value="1"/>
</dbReference>
<dbReference type="PANTHER" id="PTHR35799">
    <property type="entry name" value="S-RIBOSYLHOMOCYSTEINE LYASE"/>
    <property type="match status" value="1"/>
</dbReference>
<dbReference type="PANTHER" id="PTHR35799:SF1">
    <property type="entry name" value="S-RIBOSYLHOMOCYSTEINE LYASE"/>
    <property type="match status" value="1"/>
</dbReference>
<dbReference type="Pfam" id="PF02664">
    <property type="entry name" value="LuxS"/>
    <property type="match status" value="1"/>
</dbReference>
<dbReference type="PIRSF" id="PIRSF006160">
    <property type="entry name" value="AI2"/>
    <property type="match status" value="1"/>
</dbReference>
<dbReference type="PRINTS" id="PR01487">
    <property type="entry name" value="LUXSPROTEIN"/>
</dbReference>
<dbReference type="SUPFAM" id="SSF63411">
    <property type="entry name" value="LuxS/MPP-like metallohydrolase"/>
    <property type="match status" value="1"/>
</dbReference>
<accession>B4TF05</accession>
<reference key="1">
    <citation type="journal article" date="2011" name="J. Bacteriol.">
        <title>Comparative genomics of 28 Salmonella enterica isolates: evidence for CRISPR-mediated adaptive sublineage evolution.</title>
        <authorList>
            <person name="Fricke W.F."/>
            <person name="Mammel M.K."/>
            <person name="McDermott P.F."/>
            <person name="Tartera C."/>
            <person name="White D.G."/>
            <person name="Leclerc J.E."/>
            <person name="Ravel J."/>
            <person name="Cebula T.A."/>
        </authorList>
    </citation>
    <scope>NUCLEOTIDE SEQUENCE [LARGE SCALE GENOMIC DNA]</scope>
    <source>
        <strain>SL476</strain>
    </source>
</reference>
<sequence>MPLLDSFAVDHTRMQAPAVRVAKTMNTPHGDAITVFDLRFCIPNKEVMPEKGIHTLEHLFAGFMRDHLNGNGVEIIDISPMGCRTGFYMSLIGTPDEQRVADAWKAAMADVLKVQDQNQIPELNVYQCGTYQMHSLSEAQDIARHILERDVRVNSNKELALPKEKLQELHI</sequence>
<comment type="function">
    <text evidence="1">Involved in the synthesis of autoinducer 2 (AI-2) which is secreted by bacteria and is used to communicate both the cell density and the metabolic potential of the environment. The regulation of gene expression in response to changes in cell density is called quorum sensing. Catalyzes the transformation of S-ribosylhomocysteine (RHC) to homocysteine (HC) and 4,5-dihydroxy-2,3-pentadione (DPD).</text>
</comment>
<comment type="catalytic activity">
    <reaction evidence="1">
        <text>S-(5-deoxy-D-ribos-5-yl)-L-homocysteine = (S)-4,5-dihydroxypentane-2,3-dione + L-homocysteine</text>
        <dbReference type="Rhea" id="RHEA:17753"/>
        <dbReference type="ChEBI" id="CHEBI:29484"/>
        <dbReference type="ChEBI" id="CHEBI:58195"/>
        <dbReference type="ChEBI" id="CHEBI:58199"/>
        <dbReference type="EC" id="4.4.1.21"/>
    </reaction>
</comment>
<comment type="cofactor">
    <cofactor evidence="1">
        <name>Fe cation</name>
        <dbReference type="ChEBI" id="CHEBI:24875"/>
    </cofactor>
    <text evidence="1">Binds 1 Fe cation per subunit.</text>
</comment>
<comment type="subunit">
    <text evidence="1">Homodimer.</text>
</comment>
<comment type="similarity">
    <text evidence="1">Belongs to the LuxS family.</text>
</comment>
<feature type="chain" id="PRO_1000093324" description="S-ribosylhomocysteine lyase">
    <location>
        <begin position="1"/>
        <end position="171"/>
    </location>
</feature>
<feature type="binding site" evidence="1">
    <location>
        <position position="54"/>
    </location>
    <ligand>
        <name>Fe cation</name>
        <dbReference type="ChEBI" id="CHEBI:24875"/>
    </ligand>
</feature>
<feature type="binding site" evidence="1">
    <location>
        <position position="58"/>
    </location>
    <ligand>
        <name>Fe cation</name>
        <dbReference type="ChEBI" id="CHEBI:24875"/>
    </ligand>
</feature>
<feature type="binding site" evidence="1">
    <location>
        <position position="128"/>
    </location>
    <ligand>
        <name>Fe cation</name>
        <dbReference type="ChEBI" id="CHEBI:24875"/>
    </ligand>
</feature>
<evidence type="ECO:0000255" key="1">
    <source>
        <dbReference type="HAMAP-Rule" id="MF_00091"/>
    </source>
</evidence>
<gene>
    <name evidence="1" type="primary">luxS</name>
    <name type="ordered locus">SeHA_C3001</name>
</gene>
<proteinExistence type="inferred from homology"/>
<name>LUXS_SALHS</name>
<protein>
    <recommendedName>
        <fullName evidence="1">S-ribosylhomocysteine lyase</fullName>
        <ecNumber evidence="1">4.4.1.21</ecNumber>
    </recommendedName>
    <alternativeName>
        <fullName evidence="1">AI-2 synthesis protein</fullName>
    </alternativeName>
    <alternativeName>
        <fullName evidence="1">Autoinducer-2 production protein LuxS</fullName>
    </alternativeName>
</protein>